<reference key="1">
    <citation type="submission" date="2007-07" db="EMBL/GenBank/DDBJ databases">
        <title>Complete sequence of Fervidobacterium nodosum Rt17-B1.</title>
        <authorList>
            <consortium name="US DOE Joint Genome Institute"/>
            <person name="Copeland A."/>
            <person name="Lucas S."/>
            <person name="Lapidus A."/>
            <person name="Barry K."/>
            <person name="Glavina del Rio T."/>
            <person name="Dalin E."/>
            <person name="Tice H."/>
            <person name="Pitluck S."/>
            <person name="Saunders E."/>
            <person name="Brettin T."/>
            <person name="Bruce D."/>
            <person name="Detter J.C."/>
            <person name="Han C."/>
            <person name="Schmutz J."/>
            <person name="Larimer F."/>
            <person name="Land M."/>
            <person name="Hauser L."/>
            <person name="Kyrpides N."/>
            <person name="Mikhailova N."/>
            <person name="Nelson K."/>
            <person name="Gogarten J.P."/>
            <person name="Noll K."/>
            <person name="Richardson P."/>
        </authorList>
    </citation>
    <scope>NUCLEOTIDE SEQUENCE [LARGE SCALE GENOMIC DNA]</scope>
    <source>
        <strain>ATCC 35602 / DSM 5306 / Rt17-B1</strain>
    </source>
</reference>
<organism>
    <name type="scientific">Fervidobacterium nodosum (strain ATCC 35602 / DSM 5306 / Rt17-B1)</name>
    <dbReference type="NCBI Taxonomy" id="381764"/>
    <lineage>
        <taxon>Bacteria</taxon>
        <taxon>Thermotogati</taxon>
        <taxon>Thermotogota</taxon>
        <taxon>Thermotogae</taxon>
        <taxon>Thermotogales</taxon>
        <taxon>Fervidobacteriaceae</taxon>
        <taxon>Fervidobacterium</taxon>
    </lineage>
</organism>
<comment type="similarity">
    <text evidence="1">Belongs to the bacterial ribosomal protein bS16 family.</text>
</comment>
<proteinExistence type="inferred from homology"/>
<keyword id="KW-1185">Reference proteome</keyword>
<keyword id="KW-0687">Ribonucleoprotein</keyword>
<keyword id="KW-0689">Ribosomal protein</keyword>
<dbReference type="EMBL" id="CP000771">
    <property type="protein sequence ID" value="ABS60501.1"/>
    <property type="molecule type" value="Genomic_DNA"/>
</dbReference>
<dbReference type="RefSeq" id="WP_011993820.1">
    <property type="nucleotide sequence ID" value="NC_009718.1"/>
</dbReference>
<dbReference type="SMR" id="A7HKR8"/>
<dbReference type="STRING" id="381764.Fnod_0646"/>
<dbReference type="KEGG" id="fno:Fnod_0646"/>
<dbReference type="eggNOG" id="COG0228">
    <property type="taxonomic scope" value="Bacteria"/>
</dbReference>
<dbReference type="HOGENOM" id="CLU_100590_5_0_0"/>
<dbReference type="OrthoDB" id="9807878at2"/>
<dbReference type="Proteomes" id="UP000002415">
    <property type="component" value="Chromosome"/>
</dbReference>
<dbReference type="GO" id="GO:0005737">
    <property type="term" value="C:cytoplasm"/>
    <property type="evidence" value="ECO:0007669"/>
    <property type="project" value="UniProtKB-ARBA"/>
</dbReference>
<dbReference type="GO" id="GO:0015935">
    <property type="term" value="C:small ribosomal subunit"/>
    <property type="evidence" value="ECO:0007669"/>
    <property type="project" value="TreeGrafter"/>
</dbReference>
<dbReference type="GO" id="GO:0003735">
    <property type="term" value="F:structural constituent of ribosome"/>
    <property type="evidence" value="ECO:0007669"/>
    <property type="project" value="InterPro"/>
</dbReference>
<dbReference type="GO" id="GO:0006412">
    <property type="term" value="P:translation"/>
    <property type="evidence" value="ECO:0007669"/>
    <property type="project" value="UniProtKB-UniRule"/>
</dbReference>
<dbReference type="FunFam" id="3.30.1320.10:FF:000005">
    <property type="entry name" value="30S ribosomal protein S16"/>
    <property type="match status" value="1"/>
</dbReference>
<dbReference type="Gene3D" id="3.30.1320.10">
    <property type="match status" value="1"/>
</dbReference>
<dbReference type="HAMAP" id="MF_00385">
    <property type="entry name" value="Ribosomal_bS16"/>
    <property type="match status" value="1"/>
</dbReference>
<dbReference type="InterPro" id="IPR000307">
    <property type="entry name" value="Ribosomal_bS16"/>
</dbReference>
<dbReference type="InterPro" id="IPR020592">
    <property type="entry name" value="Ribosomal_bS16_CS"/>
</dbReference>
<dbReference type="InterPro" id="IPR023803">
    <property type="entry name" value="Ribosomal_bS16_dom_sf"/>
</dbReference>
<dbReference type="NCBIfam" id="TIGR00002">
    <property type="entry name" value="S16"/>
    <property type="match status" value="1"/>
</dbReference>
<dbReference type="PANTHER" id="PTHR12919">
    <property type="entry name" value="30S RIBOSOMAL PROTEIN S16"/>
    <property type="match status" value="1"/>
</dbReference>
<dbReference type="PANTHER" id="PTHR12919:SF20">
    <property type="entry name" value="SMALL RIBOSOMAL SUBUNIT PROTEIN BS16M"/>
    <property type="match status" value="1"/>
</dbReference>
<dbReference type="Pfam" id="PF00886">
    <property type="entry name" value="Ribosomal_S16"/>
    <property type="match status" value="1"/>
</dbReference>
<dbReference type="SUPFAM" id="SSF54565">
    <property type="entry name" value="Ribosomal protein S16"/>
    <property type="match status" value="1"/>
</dbReference>
<dbReference type="PROSITE" id="PS00732">
    <property type="entry name" value="RIBOSOMAL_S16"/>
    <property type="match status" value="1"/>
</dbReference>
<name>RS16_FERNB</name>
<feature type="chain" id="PRO_1000072195" description="Small ribosomal subunit protein bS16">
    <location>
        <begin position="1"/>
        <end position="90"/>
    </location>
</feature>
<protein>
    <recommendedName>
        <fullName evidence="1">Small ribosomal subunit protein bS16</fullName>
    </recommendedName>
    <alternativeName>
        <fullName evidence="2">30S ribosomal protein S16</fullName>
    </alternativeName>
</protein>
<accession>A7HKR8</accession>
<gene>
    <name evidence="1" type="primary">rpsP</name>
    <name type="ordered locus">Fnod_0646</name>
</gene>
<sequence>MVRIRLTRMGKKKQPFYRIVVVDQKKKRDGAYVESLGYYNPLKEPYEVKVDIDRAVEWMLKGAQPSETVSKLLGKLGLYEKLEEAKSKKA</sequence>
<evidence type="ECO:0000255" key="1">
    <source>
        <dbReference type="HAMAP-Rule" id="MF_00385"/>
    </source>
</evidence>
<evidence type="ECO:0000305" key="2"/>